<comment type="function">
    <text evidence="1">Binds 16S rRNA, required for the assembly of 30S particles and may also be responsible for determining the conformation of the 16S rRNA at the A site.</text>
</comment>
<comment type="cofactor">
    <cofactor evidence="1">
        <name>Zn(2+)</name>
        <dbReference type="ChEBI" id="CHEBI:29105"/>
    </cofactor>
    <text evidence="1">Binds 1 zinc ion per subunit.</text>
</comment>
<comment type="subunit">
    <text evidence="1">Part of the 30S ribosomal subunit. Contacts proteins S3 and S10.</text>
</comment>
<comment type="similarity">
    <text evidence="1">Belongs to the universal ribosomal protein uS14 family. Zinc-binding uS14 subfamily.</text>
</comment>
<gene>
    <name evidence="1" type="primary">rpsZ</name>
    <name evidence="1" type="synonym">rpsN</name>
    <name type="ordered locus">CBO3468</name>
    <name type="ordered locus">CLC_3412</name>
</gene>
<evidence type="ECO:0000255" key="1">
    <source>
        <dbReference type="HAMAP-Rule" id="MF_01364"/>
    </source>
</evidence>
<evidence type="ECO:0000305" key="2"/>
<proteinExistence type="inferred from homology"/>
<keyword id="KW-0479">Metal-binding</keyword>
<keyword id="KW-1185">Reference proteome</keyword>
<keyword id="KW-0687">Ribonucleoprotein</keyword>
<keyword id="KW-0689">Ribosomal protein</keyword>
<keyword id="KW-0694">RNA-binding</keyword>
<keyword id="KW-0699">rRNA-binding</keyword>
<keyword id="KW-0862">Zinc</keyword>
<organism>
    <name type="scientific">Clostridium botulinum (strain Hall / ATCC 3502 / NCTC 13319 / Type A)</name>
    <dbReference type="NCBI Taxonomy" id="441771"/>
    <lineage>
        <taxon>Bacteria</taxon>
        <taxon>Bacillati</taxon>
        <taxon>Bacillota</taxon>
        <taxon>Clostridia</taxon>
        <taxon>Eubacteriales</taxon>
        <taxon>Clostridiaceae</taxon>
        <taxon>Clostridium</taxon>
    </lineage>
</organism>
<dbReference type="EMBL" id="CP000727">
    <property type="protein sequence ID" value="ABS37467.1"/>
    <property type="molecule type" value="Genomic_DNA"/>
</dbReference>
<dbReference type="EMBL" id="AM412317">
    <property type="protein sequence ID" value="CAL85028.1"/>
    <property type="molecule type" value="Genomic_DNA"/>
</dbReference>
<dbReference type="RefSeq" id="WP_003357636.1">
    <property type="nucleotide sequence ID" value="NC_009698.1"/>
</dbReference>
<dbReference type="RefSeq" id="YP_001255949.1">
    <property type="nucleotide sequence ID" value="NC_009495.1"/>
</dbReference>
<dbReference type="RefSeq" id="YP_001389190.1">
    <property type="nucleotide sequence ID" value="NC_009698.1"/>
</dbReference>
<dbReference type="SMR" id="A5I7J3"/>
<dbReference type="KEGG" id="cbh:CLC_3412"/>
<dbReference type="KEGG" id="cbo:CBO3468"/>
<dbReference type="PATRIC" id="fig|413999.7.peg.3444"/>
<dbReference type="HOGENOM" id="CLU_139869_3_0_9"/>
<dbReference type="PRO" id="PR:A5I7J3"/>
<dbReference type="Proteomes" id="UP000001986">
    <property type="component" value="Chromosome"/>
</dbReference>
<dbReference type="GO" id="GO:0005737">
    <property type="term" value="C:cytoplasm"/>
    <property type="evidence" value="ECO:0007669"/>
    <property type="project" value="UniProtKB-ARBA"/>
</dbReference>
<dbReference type="GO" id="GO:0015935">
    <property type="term" value="C:small ribosomal subunit"/>
    <property type="evidence" value="ECO:0000318"/>
    <property type="project" value="GO_Central"/>
</dbReference>
<dbReference type="GO" id="GO:0019843">
    <property type="term" value="F:rRNA binding"/>
    <property type="evidence" value="ECO:0007669"/>
    <property type="project" value="UniProtKB-UniRule"/>
</dbReference>
<dbReference type="GO" id="GO:0003735">
    <property type="term" value="F:structural constituent of ribosome"/>
    <property type="evidence" value="ECO:0000318"/>
    <property type="project" value="GO_Central"/>
</dbReference>
<dbReference type="GO" id="GO:0008270">
    <property type="term" value="F:zinc ion binding"/>
    <property type="evidence" value="ECO:0007669"/>
    <property type="project" value="UniProtKB-UniRule"/>
</dbReference>
<dbReference type="GO" id="GO:0006412">
    <property type="term" value="P:translation"/>
    <property type="evidence" value="ECO:0000318"/>
    <property type="project" value="GO_Central"/>
</dbReference>
<dbReference type="FunFam" id="4.10.830.10:FF:000001">
    <property type="entry name" value="30S ribosomal protein S14 type Z"/>
    <property type="match status" value="1"/>
</dbReference>
<dbReference type="Gene3D" id="4.10.830.10">
    <property type="entry name" value="30s Ribosomal Protein S14, Chain N"/>
    <property type="match status" value="1"/>
</dbReference>
<dbReference type="HAMAP" id="MF_01364_B">
    <property type="entry name" value="Ribosomal_uS14_2_B"/>
    <property type="match status" value="1"/>
</dbReference>
<dbReference type="InterPro" id="IPR001209">
    <property type="entry name" value="Ribosomal_uS14"/>
</dbReference>
<dbReference type="InterPro" id="IPR023053">
    <property type="entry name" value="Ribosomal_uS14_bact"/>
</dbReference>
<dbReference type="InterPro" id="IPR043140">
    <property type="entry name" value="Ribosomal_uS14_sf"/>
</dbReference>
<dbReference type="NCBIfam" id="NF005974">
    <property type="entry name" value="PRK08061.1"/>
    <property type="match status" value="1"/>
</dbReference>
<dbReference type="PANTHER" id="PTHR19836">
    <property type="entry name" value="30S RIBOSOMAL PROTEIN S14"/>
    <property type="match status" value="1"/>
</dbReference>
<dbReference type="PANTHER" id="PTHR19836:SF19">
    <property type="entry name" value="SMALL RIBOSOMAL SUBUNIT PROTEIN US14M"/>
    <property type="match status" value="1"/>
</dbReference>
<dbReference type="Pfam" id="PF00253">
    <property type="entry name" value="Ribosomal_S14"/>
    <property type="match status" value="1"/>
</dbReference>
<dbReference type="SUPFAM" id="SSF57716">
    <property type="entry name" value="Glucocorticoid receptor-like (DNA-binding domain)"/>
    <property type="match status" value="1"/>
</dbReference>
<name>RS14Z_CLOBH</name>
<protein>
    <recommendedName>
        <fullName evidence="1">Small ribosomal subunit protein uS14</fullName>
    </recommendedName>
    <alternativeName>
        <fullName evidence="2">30S ribosomal protein S14 type Z</fullName>
    </alternativeName>
</protein>
<accession>A5I7J3</accession>
<accession>A7G8S5</accession>
<feature type="chain" id="PRO_1000067935" description="Small ribosomal subunit protein uS14">
    <location>
        <begin position="1"/>
        <end position="61"/>
    </location>
</feature>
<feature type="binding site" evidence="1">
    <location>
        <position position="24"/>
    </location>
    <ligand>
        <name>Zn(2+)</name>
        <dbReference type="ChEBI" id="CHEBI:29105"/>
    </ligand>
</feature>
<feature type="binding site" evidence="1">
    <location>
        <position position="27"/>
    </location>
    <ligand>
        <name>Zn(2+)</name>
        <dbReference type="ChEBI" id="CHEBI:29105"/>
    </ligand>
</feature>
<feature type="binding site" evidence="1">
    <location>
        <position position="40"/>
    </location>
    <ligand>
        <name>Zn(2+)</name>
        <dbReference type="ChEBI" id="CHEBI:29105"/>
    </ligand>
</feature>
<feature type="binding site" evidence="1">
    <location>
        <position position="43"/>
    </location>
    <ligand>
        <name>Zn(2+)</name>
        <dbReference type="ChEBI" id="CHEBI:29105"/>
    </ligand>
</feature>
<sequence>MARKALIEKWNKTPKHSTRAYTRCRICGRPHAVLKKYGICRICFRELAYKGEIPGCKKASW</sequence>
<reference key="1">
    <citation type="journal article" date="2007" name="Genome Res.">
        <title>Genome sequence of a proteolytic (Group I) Clostridium botulinum strain Hall A and comparative analysis of the clostridial genomes.</title>
        <authorList>
            <person name="Sebaihia M."/>
            <person name="Peck M.W."/>
            <person name="Minton N.P."/>
            <person name="Thomson N.R."/>
            <person name="Holden M.T.G."/>
            <person name="Mitchell W.J."/>
            <person name="Carter A.T."/>
            <person name="Bentley S.D."/>
            <person name="Mason D.R."/>
            <person name="Crossman L."/>
            <person name="Paul C.J."/>
            <person name="Ivens A."/>
            <person name="Wells-Bennik M.H.J."/>
            <person name="Davis I.J."/>
            <person name="Cerdeno-Tarraga A.M."/>
            <person name="Churcher C."/>
            <person name="Quail M.A."/>
            <person name="Chillingworth T."/>
            <person name="Feltwell T."/>
            <person name="Fraser A."/>
            <person name="Goodhead I."/>
            <person name="Hance Z."/>
            <person name="Jagels K."/>
            <person name="Larke N."/>
            <person name="Maddison M."/>
            <person name="Moule S."/>
            <person name="Mungall K."/>
            <person name="Norbertczak H."/>
            <person name="Rabbinowitsch E."/>
            <person name="Sanders M."/>
            <person name="Simmonds M."/>
            <person name="White B."/>
            <person name="Whithead S."/>
            <person name="Parkhill J."/>
        </authorList>
    </citation>
    <scope>NUCLEOTIDE SEQUENCE [LARGE SCALE GENOMIC DNA]</scope>
    <source>
        <strain>Hall / ATCC 3502 / NCTC 13319 / Type A</strain>
    </source>
</reference>
<reference key="2">
    <citation type="journal article" date="2007" name="PLoS ONE">
        <title>Analysis of the neurotoxin complex genes in Clostridium botulinum A1-A4 and B1 strains: BoNT/A3, /Ba4 and /B1 clusters are located within plasmids.</title>
        <authorList>
            <person name="Smith T.J."/>
            <person name="Hill K.K."/>
            <person name="Foley B.T."/>
            <person name="Detter J.C."/>
            <person name="Munk A.C."/>
            <person name="Bruce D.C."/>
            <person name="Doggett N.A."/>
            <person name="Smith L.A."/>
            <person name="Marks J.D."/>
            <person name="Xie G."/>
            <person name="Brettin T.S."/>
        </authorList>
    </citation>
    <scope>NUCLEOTIDE SEQUENCE [LARGE SCALE GENOMIC DNA]</scope>
    <source>
        <strain>Hall / ATCC 3502 / NCTC 13319 / Type A</strain>
    </source>
</reference>